<proteinExistence type="evidence at protein level"/>
<comment type="function">
    <text evidence="1">Required for anaerobic carnitine reduction. May bring reductant to CaiA.</text>
</comment>
<comment type="pathway">
    <text>Amine and polyamine metabolism; carnitine metabolism.</text>
</comment>
<comment type="subunit">
    <text evidence="2">Heterodimer of FixA and FixB.</text>
</comment>
<comment type="interaction">
    <interactant intactId="EBI-1113126">
        <id>P60566</id>
    </interactant>
    <interactant intactId="EBI-547696">
        <id>P0A9U1</id>
        <label>ybhF</label>
    </interactant>
    <organismsDiffer>false</organismsDiffer>
    <experiments>3</experiments>
</comment>
<comment type="similarity">
    <text evidence="2">Belongs to the ETF beta-subunit/FixA family.</text>
</comment>
<protein>
    <recommendedName>
        <fullName>Protein FixA</fullName>
    </recommendedName>
</protein>
<keyword id="KW-0249">Electron transport</keyword>
<keyword id="KW-1185">Reference proteome</keyword>
<keyword id="KW-0813">Transport</keyword>
<sequence length="256" mass="27144">MKIITCYKCVPDEQDIAVNNADGSLDFSKADAKISQYDLNAIEAACQLKQQAAEAQVTALSVGGKALTNAKGRKDVLSRGPDELIVVIDDQFEQALPQQTASALAAAAQKAGFDLILCGDGSSDLYAQQVGLLVGEILNIPAVNGVSKIISLTADTLTVERELEDETETLSIPLPAVVAVSTDINSPQIPSMKAILGAAKKPVQVWSAADIGFNAEAAWSEQQVAAPKQRERQRIVIEGDGEEQIAAFAENLRKVI</sequence>
<dbReference type="EMBL" id="X71977">
    <property type="protein sequence ID" value="CAA50797.1"/>
    <property type="molecule type" value="Genomic_DNA"/>
</dbReference>
<dbReference type="EMBL" id="U00096">
    <property type="protein sequence ID" value="AAC73152.2"/>
    <property type="molecule type" value="Genomic_DNA"/>
</dbReference>
<dbReference type="EMBL" id="AP009048">
    <property type="protein sequence ID" value="BAB96610.2"/>
    <property type="molecule type" value="Genomic_DNA"/>
</dbReference>
<dbReference type="PIR" id="A64725">
    <property type="entry name" value="A64725"/>
</dbReference>
<dbReference type="RefSeq" id="NP_414583.2">
    <property type="nucleotide sequence ID" value="NC_000913.3"/>
</dbReference>
<dbReference type="RefSeq" id="WP_000692204.1">
    <property type="nucleotide sequence ID" value="NZ_STEB01000010.1"/>
</dbReference>
<dbReference type="SMR" id="P60566"/>
<dbReference type="BioGRID" id="4262207">
    <property type="interactions" value="15"/>
</dbReference>
<dbReference type="BioGRID" id="851643">
    <property type="interactions" value="3"/>
</dbReference>
<dbReference type="FunCoup" id="P60566">
    <property type="interactions" value="749"/>
</dbReference>
<dbReference type="IntAct" id="P60566">
    <property type="interactions" value="8"/>
</dbReference>
<dbReference type="STRING" id="511145.b0041"/>
<dbReference type="PaxDb" id="511145-b0041"/>
<dbReference type="EnsemblBacteria" id="AAC73152">
    <property type="protein sequence ID" value="AAC73152"/>
    <property type="gene ID" value="b0041"/>
</dbReference>
<dbReference type="GeneID" id="947316"/>
<dbReference type="KEGG" id="ecj:JW0040"/>
<dbReference type="KEGG" id="eco:b0041"/>
<dbReference type="KEGG" id="ecoc:C3026_00215"/>
<dbReference type="PATRIC" id="fig|1411691.4.peg.2242"/>
<dbReference type="EchoBASE" id="EB1523"/>
<dbReference type="eggNOG" id="COG2086">
    <property type="taxonomic scope" value="Bacteria"/>
</dbReference>
<dbReference type="HOGENOM" id="CLU_060196_2_2_6"/>
<dbReference type="InParanoid" id="P60566"/>
<dbReference type="OMA" id="ADLNEWD"/>
<dbReference type="OrthoDB" id="9804960at2"/>
<dbReference type="PhylomeDB" id="P60566"/>
<dbReference type="BioCyc" id="EcoCyc:EG11562-MONOMER"/>
<dbReference type="UniPathway" id="UPA00117"/>
<dbReference type="PRO" id="PR:P60566"/>
<dbReference type="Proteomes" id="UP000000625">
    <property type="component" value="Chromosome"/>
</dbReference>
<dbReference type="GO" id="GO:0009055">
    <property type="term" value="F:electron transfer activity"/>
    <property type="evidence" value="ECO:0000318"/>
    <property type="project" value="GO_Central"/>
</dbReference>
<dbReference type="GO" id="GO:0042413">
    <property type="term" value="P:carnitine catabolic process"/>
    <property type="evidence" value="ECO:0000315"/>
    <property type="project" value="EcoCyc"/>
</dbReference>
<dbReference type="GO" id="GO:0009437">
    <property type="term" value="P:carnitine metabolic process"/>
    <property type="evidence" value="ECO:0000315"/>
    <property type="project" value="EcoliWiki"/>
</dbReference>
<dbReference type="CDD" id="cd01714">
    <property type="entry name" value="ETF_beta"/>
    <property type="match status" value="1"/>
</dbReference>
<dbReference type="FunFam" id="3.40.50.620:FF:000072">
    <property type="entry name" value="Protein FixA homolog"/>
    <property type="match status" value="1"/>
</dbReference>
<dbReference type="Gene3D" id="3.40.50.620">
    <property type="entry name" value="HUPs"/>
    <property type="match status" value="1"/>
</dbReference>
<dbReference type="HAMAP" id="MF_01055">
    <property type="entry name" value="FixA"/>
    <property type="match status" value="1"/>
</dbReference>
<dbReference type="InterPro" id="IPR000049">
    <property type="entry name" value="ET-Flavoprotein_bsu_CS"/>
</dbReference>
<dbReference type="InterPro" id="IPR014730">
    <property type="entry name" value="ETF_a/b_N"/>
</dbReference>
<dbReference type="InterPro" id="IPR012255">
    <property type="entry name" value="ETF_b"/>
</dbReference>
<dbReference type="InterPro" id="IPR033948">
    <property type="entry name" value="ETF_beta_N"/>
</dbReference>
<dbReference type="InterPro" id="IPR023463">
    <property type="entry name" value="FixA"/>
</dbReference>
<dbReference type="InterPro" id="IPR014729">
    <property type="entry name" value="Rossmann-like_a/b/a_fold"/>
</dbReference>
<dbReference type="NCBIfam" id="NF002888">
    <property type="entry name" value="PRK03359.1"/>
    <property type="match status" value="1"/>
</dbReference>
<dbReference type="PANTHER" id="PTHR21294">
    <property type="entry name" value="ELECTRON TRANSFER FLAVOPROTEIN BETA-SUBUNIT"/>
    <property type="match status" value="1"/>
</dbReference>
<dbReference type="PANTHER" id="PTHR21294:SF17">
    <property type="entry name" value="PROTEIN FIXA"/>
    <property type="match status" value="1"/>
</dbReference>
<dbReference type="Pfam" id="PF01012">
    <property type="entry name" value="ETF"/>
    <property type="match status" value="1"/>
</dbReference>
<dbReference type="PIRSF" id="PIRSF000090">
    <property type="entry name" value="Beta-ETF"/>
    <property type="match status" value="1"/>
</dbReference>
<dbReference type="SMART" id="SM00893">
    <property type="entry name" value="ETF"/>
    <property type="match status" value="1"/>
</dbReference>
<dbReference type="SUPFAM" id="SSF52402">
    <property type="entry name" value="Adenine nucleotide alpha hydrolases-like"/>
    <property type="match status" value="1"/>
</dbReference>
<dbReference type="PROSITE" id="PS01065">
    <property type="entry name" value="ETF_BETA"/>
    <property type="match status" value="1"/>
</dbReference>
<accession>P60566</accession>
<accession>P31573</accession>
<accession>P75625</accession>
<accession>P76901</accession>
<accession>Q8XA29</accession>
<evidence type="ECO:0000269" key="1">
    <source>
    </source>
</evidence>
<evidence type="ECO:0000305" key="2"/>
<name>FIXA_ECOLI</name>
<organism>
    <name type="scientific">Escherichia coli (strain K12)</name>
    <dbReference type="NCBI Taxonomy" id="83333"/>
    <lineage>
        <taxon>Bacteria</taxon>
        <taxon>Pseudomonadati</taxon>
        <taxon>Pseudomonadota</taxon>
        <taxon>Gammaproteobacteria</taxon>
        <taxon>Enterobacterales</taxon>
        <taxon>Enterobacteriaceae</taxon>
        <taxon>Escherichia</taxon>
    </lineage>
</organism>
<feature type="chain" id="PRO_0000167892" description="Protein FixA">
    <location>
        <begin position="1"/>
        <end position="256"/>
    </location>
</feature>
<feature type="sequence conflict" description="In Ref. 1; CAA50797." evidence="2" ref="1">
    <original>EA</original>
    <variation>VD</variation>
    <location>
        <begin position="216"/>
        <end position="217"/>
    </location>
</feature>
<gene>
    <name type="primary">fixA</name>
    <name type="synonym">yaaQ</name>
    <name type="ordered locus">b0041</name>
    <name type="ordered locus">JW0040</name>
</gene>
<reference key="1">
    <citation type="journal article" date="1995" name="J. Basic Microbiol.">
        <title>The fix Escherichia coli region contains four genes related to carnitine metabolism.</title>
        <authorList>
            <person name="Eichler K."/>
            <person name="Buchet A."/>
            <person name="Bourgis F."/>
            <person name="Kleber H.-P."/>
            <person name="Mandrand-Berthelot M.-A."/>
        </authorList>
    </citation>
    <scope>NUCLEOTIDE SEQUENCE [GENOMIC DNA]</scope>
    <source>
        <strain>O44:K74</strain>
    </source>
</reference>
<reference key="2">
    <citation type="journal article" date="1992" name="Nucleic Acids Res.">
        <title>Systematic sequencing of the Escherichia coli genome: analysis of the 0-2.4 min region.</title>
        <authorList>
            <person name="Yura T."/>
            <person name="Mori H."/>
            <person name="Nagai H."/>
            <person name="Nagata T."/>
            <person name="Ishihama A."/>
            <person name="Fujita N."/>
            <person name="Isono K."/>
            <person name="Mizobuchi K."/>
            <person name="Nakata A."/>
        </authorList>
    </citation>
    <scope>NUCLEOTIDE SEQUENCE [LARGE SCALE GENOMIC DNA]</scope>
    <source>
        <strain>K12</strain>
    </source>
</reference>
<reference key="3">
    <citation type="journal article" date="1997" name="Science">
        <title>The complete genome sequence of Escherichia coli K-12.</title>
        <authorList>
            <person name="Blattner F.R."/>
            <person name="Plunkett G. III"/>
            <person name="Bloch C.A."/>
            <person name="Perna N.T."/>
            <person name="Burland V."/>
            <person name="Riley M."/>
            <person name="Collado-Vides J."/>
            <person name="Glasner J.D."/>
            <person name="Rode C.K."/>
            <person name="Mayhew G.F."/>
            <person name="Gregor J."/>
            <person name="Davis N.W."/>
            <person name="Kirkpatrick H.A."/>
            <person name="Goeden M.A."/>
            <person name="Rose D.J."/>
            <person name="Mau B."/>
            <person name="Shao Y."/>
        </authorList>
    </citation>
    <scope>NUCLEOTIDE SEQUENCE [LARGE SCALE GENOMIC DNA]</scope>
    <source>
        <strain>K12 / MG1655 / ATCC 47076</strain>
    </source>
</reference>
<reference key="4">
    <citation type="journal article" date="2006" name="Mol. Syst. Biol.">
        <title>Highly accurate genome sequences of Escherichia coli K-12 strains MG1655 and W3110.</title>
        <authorList>
            <person name="Hayashi K."/>
            <person name="Morooka N."/>
            <person name="Yamamoto Y."/>
            <person name="Fujita K."/>
            <person name="Isono K."/>
            <person name="Choi S."/>
            <person name="Ohtsubo E."/>
            <person name="Baba T."/>
            <person name="Wanner B.L."/>
            <person name="Mori H."/>
            <person name="Horiuchi T."/>
        </authorList>
    </citation>
    <scope>NUCLEOTIDE SEQUENCE [LARGE SCALE GENOMIC DNA]</scope>
    <scope>SEQUENCE REVISION TO 80</scope>
    <source>
        <strain>K12 / W3110 / ATCC 27325 / DSM 5911</strain>
    </source>
</reference>
<reference key="5">
    <citation type="journal article" date="2002" name="J. Bacteriol.">
        <title>The fixA and fixB genes are necessary for anaerobic carnitine reduction in Escherichia coli.</title>
        <authorList>
            <person name="Walt A."/>
            <person name="Kahn M.L."/>
        </authorList>
    </citation>
    <scope>FUNCTION</scope>
    <source>
        <strain>K12 / BW25113</strain>
    </source>
</reference>